<dbReference type="EMBL" id="CP000026">
    <property type="protein sequence ID" value="AAV77296.1"/>
    <property type="molecule type" value="Genomic_DNA"/>
</dbReference>
<dbReference type="RefSeq" id="WP_000921382.1">
    <property type="nucleotide sequence ID" value="NC_006511.1"/>
</dbReference>
<dbReference type="SMR" id="Q5PHH0"/>
<dbReference type="DNASU" id="3175376"/>
<dbReference type="KEGG" id="spt:SPA1351"/>
<dbReference type="HOGENOM" id="CLU_117653_2_1_6"/>
<dbReference type="Proteomes" id="UP000008185">
    <property type="component" value="Chromosome"/>
</dbReference>
<dbReference type="GO" id="GO:0005886">
    <property type="term" value="C:plasma membrane"/>
    <property type="evidence" value="ECO:0007669"/>
    <property type="project" value="UniProtKB-SubCell"/>
</dbReference>
<dbReference type="HAMAP" id="MF_00010">
    <property type="entry name" value="UPF0060"/>
    <property type="match status" value="1"/>
</dbReference>
<dbReference type="InterPro" id="IPR003844">
    <property type="entry name" value="UPF0060"/>
</dbReference>
<dbReference type="NCBIfam" id="NF002586">
    <property type="entry name" value="PRK02237.1"/>
    <property type="match status" value="1"/>
</dbReference>
<dbReference type="PANTHER" id="PTHR36116">
    <property type="entry name" value="UPF0060 MEMBRANE PROTEIN YNFA"/>
    <property type="match status" value="1"/>
</dbReference>
<dbReference type="PANTHER" id="PTHR36116:SF1">
    <property type="entry name" value="UPF0060 MEMBRANE PROTEIN YNFA"/>
    <property type="match status" value="1"/>
</dbReference>
<dbReference type="Pfam" id="PF02694">
    <property type="entry name" value="UPF0060"/>
    <property type="match status" value="1"/>
</dbReference>
<dbReference type="SUPFAM" id="SSF103481">
    <property type="entry name" value="Multidrug resistance efflux transporter EmrE"/>
    <property type="match status" value="1"/>
</dbReference>
<evidence type="ECO:0000255" key="1">
    <source>
        <dbReference type="HAMAP-Rule" id="MF_00010"/>
    </source>
</evidence>
<feature type="chain" id="PRO_0000282263" description="UPF0060 membrane protein YnfA">
    <location>
        <begin position="1"/>
        <end position="108"/>
    </location>
</feature>
<feature type="topological domain" description="Periplasmic" evidence="1">
    <location>
        <begin position="1"/>
        <end position="5"/>
    </location>
</feature>
<feature type="transmembrane region" description="Helical" evidence="1">
    <location>
        <begin position="6"/>
        <end position="26"/>
    </location>
</feature>
<feature type="topological domain" description="Cytoplasmic" evidence="1">
    <location>
        <begin position="27"/>
        <end position="30"/>
    </location>
</feature>
<feature type="transmembrane region" description="Helical" evidence="1">
    <location>
        <begin position="31"/>
        <end position="51"/>
    </location>
</feature>
<feature type="topological domain" description="Periplasmic" evidence="1">
    <location>
        <begin position="52"/>
        <end position="60"/>
    </location>
</feature>
<feature type="transmembrane region" description="Helical" evidence="1">
    <location>
        <begin position="61"/>
        <end position="81"/>
    </location>
</feature>
<feature type="topological domain" description="Cytoplasmic" evidence="1">
    <location>
        <begin position="82"/>
        <end position="84"/>
    </location>
</feature>
<feature type="transmembrane region" description="Helical" evidence="1">
    <location>
        <begin position="85"/>
        <end position="105"/>
    </location>
</feature>
<feature type="topological domain" description="Periplasmic" evidence="1">
    <location>
        <begin position="106"/>
        <end position="108"/>
    </location>
</feature>
<gene>
    <name evidence="1" type="primary">ynfA</name>
    <name type="ordered locus">SPA1351</name>
</gene>
<protein>
    <recommendedName>
        <fullName evidence="1">UPF0060 membrane protein YnfA</fullName>
    </recommendedName>
</protein>
<accession>Q5PHH0</accession>
<organism>
    <name type="scientific">Salmonella paratyphi A (strain ATCC 9150 / SARB42)</name>
    <dbReference type="NCBI Taxonomy" id="295319"/>
    <lineage>
        <taxon>Bacteria</taxon>
        <taxon>Pseudomonadati</taxon>
        <taxon>Pseudomonadota</taxon>
        <taxon>Gammaproteobacteria</taxon>
        <taxon>Enterobacterales</taxon>
        <taxon>Enterobacteriaceae</taxon>
        <taxon>Salmonella</taxon>
    </lineage>
</organism>
<keyword id="KW-0997">Cell inner membrane</keyword>
<keyword id="KW-1003">Cell membrane</keyword>
<keyword id="KW-0472">Membrane</keyword>
<keyword id="KW-0812">Transmembrane</keyword>
<keyword id="KW-1133">Transmembrane helix</keyword>
<sequence length="108" mass="11948">MLKTTLLFFVTALCEIIGCFLPWLWIKRGASVWWLLPAAASLALFVWLLTLHPAASGRVYAAYGGVYVCTALLWLRVVDGVRLTVYDWCGALIALCGMLIIVVGWGRT</sequence>
<reference key="1">
    <citation type="journal article" date="2004" name="Nat. Genet.">
        <title>Comparison of genome degradation in Paratyphi A and Typhi, human-restricted serovars of Salmonella enterica that cause typhoid.</title>
        <authorList>
            <person name="McClelland M."/>
            <person name="Sanderson K.E."/>
            <person name="Clifton S.W."/>
            <person name="Latreille P."/>
            <person name="Porwollik S."/>
            <person name="Sabo A."/>
            <person name="Meyer R."/>
            <person name="Bieri T."/>
            <person name="Ozersky P."/>
            <person name="McLellan M."/>
            <person name="Harkins C.R."/>
            <person name="Wang C."/>
            <person name="Nguyen C."/>
            <person name="Berghoff A."/>
            <person name="Elliott G."/>
            <person name="Kohlberg S."/>
            <person name="Strong C."/>
            <person name="Du F."/>
            <person name="Carter J."/>
            <person name="Kremizki C."/>
            <person name="Layman D."/>
            <person name="Leonard S."/>
            <person name="Sun H."/>
            <person name="Fulton L."/>
            <person name="Nash W."/>
            <person name="Miner T."/>
            <person name="Minx P."/>
            <person name="Delehaunty K."/>
            <person name="Fronick C."/>
            <person name="Magrini V."/>
            <person name="Nhan M."/>
            <person name="Warren W."/>
            <person name="Florea L."/>
            <person name="Spieth J."/>
            <person name="Wilson R.K."/>
        </authorList>
    </citation>
    <scope>NUCLEOTIDE SEQUENCE [LARGE SCALE GENOMIC DNA]</scope>
    <source>
        <strain>ATCC 9150 / SARB42</strain>
    </source>
</reference>
<proteinExistence type="inferred from homology"/>
<comment type="subcellular location">
    <subcellularLocation>
        <location evidence="1">Cell inner membrane</location>
        <topology evidence="1">Multi-pass membrane protein</topology>
    </subcellularLocation>
</comment>
<comment type="similarity">
    <text evidence="1">Belongs to the UPF0060 family.</text>
</comment>
<name>YNFA_SALPA</name>